<proteinExistence type="inferred from homology"/>
<protein>
    <recommendedName>
        <fullName evidence="1">UPF0154 protein MGAS10270_Spy0296</fullName>
    </recommendedName>
</protein>
<dbReference type="EMBL" id="CP000260">
    <property type="protein sequence ID" value="ABF33361.1"/>
    <property type="molecule type" value="Genomic_DNA"/>
</dbReference>
<dbReference type="RefSeq" id="WP_002985908.1">
    <property type="nucleotide sequence ID" value="NZ_CVUH01000002.1"/>
</dbReference>
<dbReference type="SMR" id="Q1JIG2"/>
<dbReference type="KEGG" id="sph:MGAS10270_Spy0296"/>
<dbReference type="HOGENOM" id="CLU_180108_0_0_9"/>
<dbReference type="Proteomes" id="UP000002436">
    <property type="component" value="Chromosome"/>
</dbReference>
<dbReference type="GO" id="GO:0005886">
    <property type="term" value="C:plasma membrane"/>
    <property type="evidence" value="ECO:0007669"/>
    <property type="project" value="UniProtKB-SubCell"/>
</dbReference>
<dbReference type="HAMAP" id="MF_00363">
    <property type="entry name" value="UPF0154"/>
    <property type="match status" value="1"/>
</dbReference>
<dbReference type="InterPro" id="IPR005359">
    <property type="entry name" value="UPF0154"/>
</dbReference>
<dbReference type="Pfam" id="PF03672">
    <property type="entry name" value="UPF0154"/>
    <property type="match status" value="1"/>
</dbReference>
<evidence type="ECO:0000255" key="1">
    <source>
        <dbReference type="HAMAP-Rule" id="MF_00363"/>
    </source>
</evidence>
<accession>Q1JIG2</accession>
<comment type="subcellular location">
    <subcellularLocation>
        <location evidence="1">Cell membrane</location>
        <topology evidence="1">Single-pass membrane protein</topology>
    </subcellularLocation>
</comment>
<comment type="similarity">
    <text evidence="1">Belongs to the UPF0154 family.</text>
</comment>
<reference key="1">
    <citation type="journal article" date="2006" name="Proc. Natl. Acad. Sci. U.S.A.">
        <title>Molecular genetic anatomy of inter- and intraserotype variation in the human bacterial pathogen group A Streptococcus.</title>
        <authorList>
            <person name="Beres S.B."/>
            <person name="Richter E.W."/>
            <person name="Nagiec M.J."/>
            <person name="Sumby P."/>
            <person name="Porcella S.F."/>
            <person name="DeLeo F.R."/>
            <person name="Musser J.M."/>
        </authorList>
    </citation>
    <scope>NUCLEOTIDE SEQUENCE [LARGE SCALE GENOMIC DNA]</scope>
    <source>
        <strain>MGAS10270</strain>
    </source>
</reference>
<feature type="chain" id="PRO_1000005643" description="UPF0154 protein MGAS10270_Spy0296">
    <location>
        <begin position="1"/>
        <end position="80"/>
    </location>
</feature>
<feature type="transmembrane region" description="Helical" evidence="1">
    <location>
        <begin position="4"/>
        <end position="24"/>
    </location>
</feature>
<name>Y296_STRPD</name>
<organism>
    <name type="scientific">Streptococcus pyogenes serotype M2 (strain MGAS10270)</name>
    <dbReference type="NCBI Taxonomy" id="370552"/>
    <lineage>
        <taxon>Bacteria</taxon>
        <taxon>Bacillati</taxon>
        <taxon>Bacillota</taxon>
        <taxon>Bacilli</taxon>
        <taxon>Lactobacillales</taxon>
        <taxon>Streptococcaceae</taxon>
        <taxon>Streptococcus</taxon>
    </lineage>
</organism>
<gene>
    <name type="ordered locus">MGAS10270_Spy0296</name>
</gene>
<sequence>MSTAIWILLLIVALGVGVFGGIFIARKQIEKEIGEHPRLTPEAIREMMSQMGQKPSEAKIQQTYRNIIKQSKAAVSKGKK</sequence>
<keyword id="KW-1003">Cell membrane</keyword>
<keyword id="KW-0472">Membrane</keyword>
<keyword id="KW-0812">Transmembrane</keyword>
<keyword id="KW-1133">Transmembrane helix</keyword>